<protein>
    <recommendedName>
        <fullName>Uncharacterized N-acetyltransferase YitI</fullName>
        <ecNumber>2.3.1.-</ecNumber>
    </recommendedName>
</protein>
<feature type="chain" id="PRO_0000360494" description="Uncharacterized N-acetyltransferase YitI">
    <location>
        <begin position="1"/>
        <end position="149"/>
    </location>
</feature>
<feature type="domain" description="N-acetyltransferase" evidence="1">
    <location>
        <begin position="2"/>
        <end position="146"/>
    </location>
</feature>
<organism>
    <name type="scientific">Bacillus subtilis (strain 168)</name>
    <dbReference type="NCBI Taxonomy" id="224308"/>
    <lineage>
        <taxon>Bacteria</taxon>
        <taxon>Bacillati</taxon>
        <taxon>Bacillota</taxon>
        <taxon>Bacilli</taxon>
        <taxon>Bacillales</taxon>
        <taxon>Bacillaceae</taxon>
        <taxon>Bacillus</taxon>
    </lineage>
</organism>
<comment type="similarity">
    <text evidence="2">Belongs to the acetyltransferase family.</text>
</comment>
<evidence type="ECO:0000255" key="1">
    <source>
        <dbReference type="PROSITE-ProRule" id="PRU00532"/>
    </source>
</evidence>
<evidence type="ECO:0000305" key="2"/>
<proteinExistence type="inferred from homology"/>
<name>YITI_BACSU</name>
<gene>
    <name type="primary">yitI</name>
    <name type="ordered locus">BSU11000</name>
</gene>
<keyword id="KW-0012">Acyltransferase</keyword>
<keyword id="KW-1185">Reference proteome</keyword>
<keyword id="KW-0808">Transferase</keyword>
<sequence length="149" mass="16943">MLEVKTISVEDTYEIRHRILRPHQSIEQCKYKEDHAEGSFHLGVFYDGTLISIASFSPQSQPLLTEASAYRLRGMATLEGYRDQKAGSTLIKHAEHKLAESGVQAVWCNARHHVKGYYAKLGWKELGEPFDIPGIGNHIVMYKTLRTSR</sequence>
<accession>O06744</accession>
<accession>Q799V5</accession>
<dbReference type="EC" id="2.3.1.-"/>
<dbReference type="EMBL" id="Y09476">
    <property type="protein sequence ID" value="CAA70664.1"/>
    <property type="molecule type" value="Genomic_DNA"/>
</dbReference>
<dbReference type="EMBL" id="AL009126">
    <property type="protein sequence ID" value="CAB12940.2"/>
    <property type="molecule type" value="Genomic_DNA"/>
</dbReference>
<dbReference type="PIR" id="B69840">
    <property type="entry name" value="B69840"/>
</dbReference>
<dbReference type="RefSeq" id="NP_388981.2">
    <property type="nucleotide sequence ID" value="NC_000964.3"/>
</dbReference>
<dbReference type="RefSeq" id="WP_009966973.1">
    <property type="nucleotide sequence ID" value="NZ_OZ025638.1"/>
</dbReference>
<dbReference type="SMR" id="O06744"/>
<dbReference type="FunCoup" id="O06744">
    <property type="interactions" value="30"/>
</dbReference>
<dbReference type="STRING" id="224308.BSU11000"/>
<dbReference type="PaxDb" id="224308-BSU11000"/>
<dbReference type="EnsemblBacteria" id="CAB12940">
    <property type="protein sequence ID" value="CAB12940"/>
    <property type="gene ID" value="BSU_11000"/>
</dbReference>
<dbReference type="GeneID" id="939344"/>
<dbReference type="KEGG" id="bsu:BSU11000"/>
<dbReference type="PATRIC" id="fig|224308.179.peg.1182"/>
<dbReference type="eggNOG" id="COG2153">
    <property type="taxonomic scope" value="Bacteria"/>
</dbReference>
<dbReference type="InParanoid" id="O06744"/>
<dbReference type="OrthoDB" id="2352823at2"/>
<dbReference type="BioCyc" id="BSUB:BSU11000-MONOMER"/>
<dbReference type="Proteomes" id="UP000001570">
    <property type="component" value="Chromosome"/>
</dbReference>
<dbReference type="GO" id="GO:0008080">
    <property type="term" value="F:N-acetyltransferase activity"/>
    <property type="evidence" value="ECO:0000318"/>
    <property type="project" value="GO_Central"/>
</dbReference>
<dbReference type="CDD" id="cd04301">
    <property type="entry name" value="NAT_SF"/>
    <property type="match status" value="1"/>
</dbReference>
<dbReference type="Gene3D" id="3.40.630.30">
    <property type="match status" value="1"/>
</dbReference>
<dbReference type="InterPro" id="IPR016181">
    <property type="entry name" value="Acyl_CoA_acyltransferase"/>
</dbReference>
<dbReference type="InterPro" id="IPR000182">
    <property type="entry name" value="GNAT_dom"/>
</dbReference>
<dbReference type="Pfam" id="PF00583">
    <property type="entry name" value="Acetyltransf_1"/>
    <property type="match status" value="1"/>
</dbReference>
<dbReference type="SUPFAM" id="SSF55729">
    <property type="entry name" value="Acyl-CoA N-acyltransferases (Nat)"/>
    <property type="match status" value="1"/>
</dbReference>
<dbReference type="PROSITE" id="PS51186">
    <property type="entry name" value="GNAT"/>
    <property type="match status" value="1"/>
</dbReference>
<reference key="1">
    <citation type="journal article" date="1997" name="Microbiology">
        <title>A Bacillus subtilis chromosome segment at the 100 degrees to 102 degrees position encoding 11 membrane proteins.</title>
        <authorList>
            <person name="Roche B."/>
            <person name="Autret S."/>
            <person name="Levine A."/>
            <person name="Vannier F."/>
            <person name="Medina N."/>
            <person name="Seror S.J."/>
        </authorList>
    </citation>
    <scope>NUCLEOTIDE SEQUENCE [GENOMIC DNA]</scope>
    <source>
        <strain>168</strain>
    </source>
</reference>
<reference key="2">
    <citation type="journal article" date="1997" name="Nature">
        <title>The complete genome sequence of the Gram-positive bacterium Bacillus subtilis.</title>
        <authorList>
            <person name="Kunst F."/>
            <person name="Ogasawara N."/>
            <person name="Moszer I."/>
            <person name="Albertini A.M."/>
            <person name="Alloni G."/>
            <person name="Azevedo V."/>
            <person name="Bertero M.G."/>
            <person name="Bessieres P."/>
            <person name="Bolotin A."/>
            <person name="Borchert S."/>
            <person name="Borriss R."/>
            <person name="Boursier L."/>
            <person name="Brans A."/>
            <person name="Braun M."/>
            <person name="Brignell S.C."/>
            <person name="Bron S."/>
            <person name="Brouillet S."/>
            <person name="Bruschi C.V."/>
            <person name="Caldwell B."/>
            <person name="Capuano V."/>
            <person name="Carter N.M."/>
            <person name="Choi S.-K."/>
            <person name="Codani J.-J."/>
            <person name="Connerton I.F."/>
            <person name="Cummings N.J."/>
            <person name="Daniel R.A."/>
            <person name="Denizot F."/>
            <person name="Devine K.M."/>
            <person name="Duesterhoeft A."/>
            <person name="Ehrlich S.D."/>
            <person name="Emmerson P.T."/>
            <person name="Entian K.-D."/>
            <person name="Errington J."/>
            <person name="Fabret C."/>
            <person name="Ferrari E."/>
            <person name="Foulger D."/>
            <person name="Fritz C."/>
            <person name="Fujita M."/>
            <person name="Fujita Y."/>
            <person name="Fuma S."/>
            <person name="Galizzi A."/>
            <person name="Galleron N."/>
            <person name="Ghim S.-Y."/>
            <person name="Glaser P."/>
            <person name="Goffeau A."/>
            <person name="Golightly E.J."/>
            <person name="Grandi G."/>
            <person name="Guiseppi G."/>
            <person name="Guy B.J."/>
            <person name="Haga K."/>
            <person name="Haiech J."/>
            <person name="Harwood C.R."/>
            <person name="Henaut A."/>
            <person name="Hilbert H."/>
            <person name="Holsappel S."/>
            <person name="Hosono S."/>
            <person name="Hullo M.-F."/>
            <person name="Itaya M."/>
            <person name="Jones L.-M."/>
            <person name="Joris B."/>
            <person name="Karamata D."/>
            <person name="Kasahara Y."/>
            <person name="Klaerr-Blanchard M."/>
            <person name="Klein C."/>
            <person name="Kobayashi Y."/>
            <person name="Koetter P."/>
            <person name="Koningstein G."/>
            <person name="Krogh S."/>
            <person name="Kumano M."/>
            <person name="Kurita K."/>
            <person name="Lapidus A."/>
            <person name="Lardinois S."/>
            <person name="Lauber J."/>
            <person name="Lazarevic V."/>
            <person name="Lee S.-M."/>
            <person name="Levine A."/>
            <person name="Liu H."/>
            <person name="Masuda S."/>
            <person name="Mauel C."/>
            <person name="Medigue C."/>
            <person name="Medina N."/>
            <person name="Mellado R.P."/>
            <person name="Mizuno M."/>
            <person name="Moestl D."/>
            <person name="Nakai S."/>
            <person name="Noback M."/>
            <person name="Noone D."/>
            <person name="O'Reilly M."/>
            <person name="Ogawa K."/>
            <person name="Ogiwara A."/>
            <person name="Oudega B."/>
            <person name="Park S.-H."/>
            <person name="Parro V."/>
            <person name="Pohl T.M."/>
            <person name="Portetelle D."/>
            <person name="Porwollik S."/>
            <person name="Prescott A.M."/>
            <person name="Presecan E."/>
            <person name="Pujic P."/>
            <person name="Purnelle B."/>
            <person name="Rapoport G."/>
            <person name="Rey M."/>
            <person name="Reynolds S."/>
            <person name="Rieger M."/>
            <person name="Rivolta C."/>
            <person name="Rocha E."/>
            <person name="Roche B."/>
            <person name="Rose M."/>
            <person name="Sadaie Y."/>
            <person name="Sato T."/>
            <person name="Scanlan E."/>
            <person name="Schleich S."/>
            <person name="Schroeter R."/>
            <person name="Scoffone F."/>
            <person name="Sekiguchi J."/>
            <person name="Sekowska A."/>
            <person name="Seror S.J."/>
            <person name="Serror P."/>
            <person name="Shin B.-S."/>
            <person name="Soldo B."/>
            <person name="Sorokin A."/>
            <person name="Tacconi E."/>
            <person name="Takagi T."/>
            <person name="Takahashi H."/>
            <person name="Takemaru K."/>
            <person name="Takeuchi M."/>
            <person name="Tamakoshi A."/>
            <person name="Tanaka T."/>
            <person name="Terpstra P."/>
            <person name="Tognoni A."/>
            <person name="Tosato V."/>
            <person name="Uchiyama S."/>
            <person name="Vandenbol M."/>
            <person name="Vannier F."/>
            <person name="Vassarotti A."/>
            <person name="Viari A."/>
            <person name="Wambutt R."/>
            <person name="Wedler E."/>
            <person name="Wedler H."/>
            <person name="Weitzenegger T."/>
            <person name="Winters P."/>
            <person name="Wipat A."/>
            <person name="Yamamoto H."/>
            <person name="Yamane K."/>
            <person name="Yasumoto K."/>
            <person name="Yata K."/>
            <person name="Yoshida K."/>
            <person name="Yoshikawa H.-F."/>
            <person name="Zumstein E."/>
            <person name="Yoshikawa H."/>
            <person name="Danchin A."/>
        </authorList>
    </citation>
    <scope>NUCLEOTIDE SEQUENCE [LARGE SCALE GENOMIC DNA]</scope>
    <source>
        <strain>168</strain>
    </source>
</reference>